<proteinExistence type="inferred from homology"/>
<sequence>MARPKVEAGVKLRGAEKVARIPVKIIPTVDLPKKPDWIRVRIPVSPEVDRIKQLLRKHKLHSVCEEASCPNLGECFSGGTATFMIMGDICTRRCPFCDVGHGRPKALDADEPKSLAIAIADLRLKYVVITSVDRDDLRDGGAQHFADCIREIRLLSPGIQLETLVPDYRGRMDVALEITAAEPPDVFNHNLETVPRLYKAARPGSDYQWSLTLLQRFKQMVPHVPTKSGLMLGLGETDEEVIEVMKRMREHDIDMLTLGQYLQPSRNHLAVQRFVHPDTFAWFAEEGYKMGFKNVASGPLVRSSYHADEQAKIAKAML</sequence>
<protein>
    <recommendedName>
        <fullName evidence="1">Lipoyl synthase</fullName>
        <ecNumber evidence="1">2.8.1.8</ecNumber>
    </recommendedName>
    <alternativeName>
        <fullName evidence="1">Lip-syn</fullName>
        <shortName evidence="1">LS</shortName>
    </alternativeName>
    <alternativeName>
        <fullName evidence="1">Lipoate synthase</fullName>
    </alternativeName>
    <alternativeName>
        <fullName evidence="1">Lipoic acid synthase</fullName>
    </alternativeName>
    <alternativeName>
        <fullName evidence="1">Sulfur insertion protein LipA</fullName>
    </alternativeName>
</protein>
<organism>
    <name type="scientific">Pseudomonas syringae pv. tomato (strain ATCC BAA-871 / DC3000)</name>
    <dbReference type="NCBI Taxonomy" id="223283"/>
    <lineage>
        <taxon>Bacteria</taxon>
        <taxon>Pseudomonadati</taxon>
        <taxon>Pseudomonadota</taxon>
        <taxon>Gammaproteobacteria</taxon>
        <taxon>Pseudomonadales</taxon>
        <taxon>Pseudomonadaceae</taxon>
        <taxon>Pseudomonas</taxon>
    </lineage>
</organism>
<reference key="1">
    <citation type="journal article" date="2003" name="Proc. Natl. Acad. Sci. U.S.A.">
        <title>The complete genome sequence of the Arabidopsis and tomato pathogen Pseudomonas syringae pv. tomato DC3000.</title>
        <authorList>
            <person name="Buell C.R."/>
            <person name="Joardar V."/>
            <person name="Lindeberg M."/>
            <person name="Selengut J."/>
            <person name="Paulsen I.T."/>
            <person name="Gwinn M.L."/>
            <person name="Dodson R.J."/>
            <person name="DeBoy R.T."/>
            <person name="Durkin A.S."/>
            <person name="Kolonay J.F."/>
            <person name="Madupu R."/>
            <person name="Daugherty S.C."/>
            <person name="Brinkac L.M."/>
            <person name="Beanan M.J."/>
            <person name="Haft D.H."/>
            <person name="Nelson W.C."/>
            <person name="Davidsen T.M."/>
            <person name="Zafar N."/>
            <person name="Zhou L."/>
            <person name="Liu J."/>
            <person name="Yuan Q."/>
            <person name="Khouri H.M."/>
            <person name="Fedorova N.B."/>
            <person name="Tran B."/>
            <person name="Russell D."/>
            <person name="Berry K.J."/>
            <person name="Utterback T.R."/>
            <person name="Van Aken S.E."/>
            <person name="Feldblyum T.V."/>
            <person name="D'Ascenzo M."/>
            <person name="Deng W.-L."/>
            <person name="Ramos A.R."/>
            <person name="Alfano J.R."/>
            <person name="Cartinhour S."/>
            <person name="Chatterjee A.K."/>
            <person name="Delaney T.P."/>
            <person name="Lazarowitz S.G."/>
            <person name="Martin G.B."/>
            <person name="Schneider D.J."/>
            <person name="Tang X."/>
            <person name="Bender C.L."/>
            <person name="White O."/>
            <person name="Fraser C.M."/>
            <person name="Collmer A."/>
        </authorList>
    </citation>
    <scope>NUCLEOTIDE SEQUENCE [LARGE SCALE GENOMIC DNA]</scope>
    <source>
        <strain>ATCC BAA-871 / DC3000</strain>
    </source>
</reference>
<dbReference type="EC" id="2.8.1.8" evidence="1"/>
<dbReference type="EMBL" id="AE016853">
    <property type="protein sequence ID" value="AAO58247.1"/>
    <property type="molecule type" value="Genomic_DNA"/>
</dbReference>
<dbReference type="RefSeq" id="NP_794552.1">
    <property type="nucleotide sequence ID" value="NC_004578.1"/>
</dbReference>
<dbReference type="SMR" id="Q87VW7"/>
<dbReference type="STRING" id="223283.PSPTO_4818"/>
<dbReference type="KEGG" id="pst:PSPTO_4818"/>
<dbReference type="PATRIC" id="fig|223283.9.peg.4928"/>
<dbReference type="eggNOG" id="COG0320">
    <property type="taxonomic scope" value="Bacteria"/>
</dbReference>
<dbReference type="HOGENOM" id="CLU_033144_2_1_6"/>
<dbReference type="OrthoDB" id="9787898at2"/>
<dbReference type="PhylomeDB" id="Q87VW7"/>
<dbReference type="UniPathway" id="UPA00538">
    <property type="reaction ID" value="UER00593"/>
</dbReference>
<dbReference type="Proteomes" id="UP000002515">
    <property type="component" value="Chromosome"/>
</dbReference>
<dbReference type="GO" id="GO:0005737">
    <property type="term" value="C:cytoplasm"/>
    <property type="evidence" value="ECO:0007669"/>
    <property type="project" value="UniProtKB-SubCell"/>
</dbReference>
<dbReference type="GO" id="GO:0051539">
    <property type="term" value="F:4 iron, 4 sulfur cluster binding"/>
    <property type="evidence" value="ECO:0007669"/>
    <property type="project" value="UniProtKB-UniRule"/>
</dbReference>
<dbReference type="GO" id="GO:0016992">
    <property type="term" value="F:lipoate synthase activity"/>
    <property type="evidence" value="ECO:0007669"/>
    <property type="project" value="UniProtKB-UniRule"/>
</dbReference>
<dbReference type="GO" id="GO:0046872">
    <property type="term" value="F:metal ion binding"/>
    <property type="evidence" value="ECO:0007669"/>
    <property type="project" value="UniProtKB-KW"/>
</dbReference>
<dbReference type="CDD" id="cd01335">
    <property type="entry name" value="Radical_SAM"/>
    <property type="match status" value="1"/>
</dbReference>
<dbReference type="FunFam" id="3.20.20.70:FF:000023">
    <property type="entry name" value="Lipoyl synthase"/>
    <property type="match status" value="1"/>
</dbReference>
<dbReference type="Gene3D" id="3.20.20.70">
    <property type="entry name" value="Aldolase class I"/>
    <property type="match status" value="1"/>
</dbReference>
<dbReference type="HAMAP" id="MF_00206">
    <property type="entry name" value="Lipoyl_synth"/>
    <property type="match status" value="1"/>
</dbReference>
<dbReference type="InterPro" id="IPR013785">
    <property type="entry name" value="Aldolase_TIM"/>
</dbReference>
<dbReference type="InterPro" id="IPR006638">
    <property type="entry name" value="Elp3/MiaA/NifB-like_rSAM"/>
</dbReference>
<dbReference type="InterPro" id="IPR031691">
    <property type="entry name" value="LIAS_N"/>
</dbReference>
<dbReference type="InterPro" id="IPR003698">
    <property type="entry name" value="Lipoyl_synth"/>
</dbReference>
<dbReference type="InterPro" id="IPR007197">
    <property type="entry name" value="rSAM"/>
</dbReference>
<dbReference type="NCBIfam" id="TIGR00510">
    <property type="entry name" value="lipA"/>
    <property type="match status" value="1"/>
</dbReference>
<dbReference type="NCBIfam" id="NF004019">
    <property type="entry name" value="PRK05481.1"/>
    <property type="match status" value="1"/>
</dbReference>
<dbReference type="NCBIfam" id="NF009544">
    <property type="entry name" value="PRK12928.1"/>
    <property type="match status" value="1"/>
</dbReference>
<dbReference type="PANTHER" id="PTHR10949">
    <property type="entry name" value="LIPOYL SYNTHASE"/>
    <property type="match status" value="1"/>
</dbReference>
<dbReference type="PANTHER" id="PTHR10949:SF0">
    <property type="entry name" value="LIPOYL SYNTHASE, MITOCHONDRIAL"/>
    <property type="match status" value="1"/>
</dbReference>
<dbReference type="Pfam" id="PF16881">
    <property type="entry name" value="LIAS_N"/>
    <property type="match status" value="1"/>
</dbReference>
<dbReference type="Pfam" id="PF04055">
    <property type="entry name" value="Radical_SAM"/>
    <property type="match status" value="1"/>
</dbReference>
<dbReference type="PIRSF" id="PIRSF005963">
    <property type="entry name" value="Lipoyl_synth"/>
    <property type="match status" value="1"/>
</dbReference>
<dbReference type="SFLD" id="SFLDF00271">
    <property type="entry name" value="lipoyl_synthase"/>
    <property type="match status" value="1"/>
</dbReference>
<dbReference type="SFLD" id="SFLDG01058">
    <property type="entry name" value="lipoyl_synthase_like"/>
    <property type="match status" value="1"/>
</dbReference>
<dbReference type="SMART" id="SM00729">
    <property type="entry name" value="Elp3"/>
    <property type="match status" value="1"/>
</dbReference>
<dbReference type="SUPFAM" id="SSF102114">
    <property type="entry name" value="Radical SAM enzymes"/>
    <property type="match status" value="1"/>
</dbReference>
<dbReference type="PROSITE" id="PS51918">
    <property type="entry name" value="RADICAL_SAM"/>
    <property type="match status" value="1"/>
</dbReference>
<gene>
    <name evidence="1" type="primary">lipA</name>
    <name type="ordered locus">PSPTO_4818</name>
</gene>
<keyword id="KW-0004">4Fe-4S</keyword>
<keyword id="KW-0963">Cytoplasm</keyword>
<keyword id="KW-0408">Iron</keyword>
<keyword id="KW-0411">Iron-sulfur</keyword>
<keyword id="KW-0479">Metal-binding</keyword>
<keyword id="KW-1185">Reference proteome</keyword>
<keyword id="KW-0949">S-adenosyl-L-methionine</keyword>
<keyword id="KW-0808">Transferase</keyword>
<feature type="chain" id="PRO_0000102344" description="Lipoyl synthase">
    <location>
        <begin position="1"/>
        <end position="318"/>
    </location>
</feature>
<feature type="domain" description="Radical SAM core" evidence="2">
    <location>
        <begin position="76"/>
        <end position="293"/>
    </location>
</feature>
<feature type="binding site" evidence="1">
    <location>
        <position position="64"/>
    </location>
    <ligand>
        <name>[4Fe-4S] cluster</name>
        <dbReference type="ChEBI" id="CHEBI:49883"/>
        <label>1</label>
    </ligand>
</feature>
<feature type="binding site" evidence="1">
    <location>
        <position position="69"/>
    </location>
    <ligand>
        <name>[4Fe-4S] cluster</name>
        <dbReference type="ChEBI" id="CHEBI:49883"/>
        <label>1</label>
    </ligand>
</feature>
<feature type="binding site" evidence="1">
    <location>
        <position position="75"/>
    </location>
    <ligand>
        <name>[4Fe-4S] cluster</name>
        <dbReference type="ChEBI" id="CHEBI:49883"/>
        <label>1</label>
    </ligand>
</feature>
<feature type="binding site" evidence="1">
    <location>
        <position position="90"/>
    </location>
    <ligand>
        <name>[4Fe-4S] cluster</name>
        <dbReference type="ChEBI" id="CHEBI:49883"/>
        <label>2</label>
        <note>4Fe-4S-S-AdoMet</note>
    </ligand>
</feature>
<feature type="binding site" evidence="1">
    <location>
        <position position="94"/>
    </location>
    <ligand>
        <name>[4Fe-4S] cluster</name>
        <dbReference type="ChEBI" id="CHEBI:49883"/>
        <label>2</label>
        <note>4Fe-4S-S-AdoMet</note>
    </ligand>
</feature>
<feature type="binding site" evidence="1">
    <location>
        <position position="97"/>
    </location>
    <ligand>
        <name>[4Fe-4S] cluster</name>
        <dbReference type="ChEBI" id="CHEBI:49883"/>
        <label>2</label>
        <note>4Fe-4S-S-AdoMet</note>
    </ligand>
</feature>
<feature type="binding site" evidence="1">
    <location>
        <position position="304"/>
    </location>
    <ligand>
        <name>[4Fe-4S] cluster</name>
        <dbReference type="ChEBI" id="CHEBI:49883"/>
        <label>1</label>
    </ligand>
</feature>
<accession>Q87VW7</accession>
<evidence type="ECO:0000255" key="1">
    <source>
        <dbReference type="HAMAP-Rule" id="MF_00206"/>
    </source>
</evidence>
<evidence type="ECO:0000255" key="2">
    <source>
        <dbReference type="PROSITE-ProRule" id="PRU01266"/>
    </source>
</evidence>
<name>LIPA_PSESM</name>
<comment type="function">
    <text evidence="1">Catalyzes the radical-mediated insertion of two sulfur atoms into the C-6 and C-8 positions of the octanoyl moiety bound to the lipoyl domains of lipoate-dependent enzymes, thereby converting the octanoylated domains into lipoylated derivatives.</text>
</comment>
<comment type="catalytic activity">
    <reaction evidence="1">
        <text>[[Fe-S] cluster scaffold protein carrying a second [4Fe-4S](2+) cluster] + N(6)-octanoyl-L-lysyl-[protein] + 2 oxidized [2Fe-2S]-[ferredoxin] + 2 S-adenosyl-L-methionine + 4 H(+) = [[Fe-S] cluster scaffold protein] + N(6)-[(R)-dihydrolipoyl]-L-lysyl-[protein] + 4 Fe(3+) + 2 hydrogen sulfide + 2 5'-deoxyadenosine + 2 L-methionine + 2 reduced [2Fe-2S]-[ferredoxin]</text>
        <dbReference type="Rhea" id="RHEA:16585"/>
        <dbReference type="Rhea" id="RHEA-COMP:9928"/>
        <dbReference type="Rhea" id="RHEA-COMP:10000"/>
        <dbReference type="Rhea" id="RHEA-COMP:10001"/>
        <dbReference type="Rhea" id="RHEA-COMP:10475"/>
        <dbReference type="Rhea" id="RHEA-COMP:14568"/>
        <dbReference type="Rhea" id="RHEA-COMP:14569"/>
        <dbReference type="ChEBI" id="CHEBI:15378"/>
        <dbReference type="ChEBI" id="CHEBI:17319"/>
        <dbReference type="ChEBI" id="CHEBI:29034"/>
        <dbReference type="ChEBI" id="CHEBI:29919"/>
        <dbReference type="ChEBI" id="CHEBI:33722"/>
        <dbReference type="ChEBI" id="CHEBI:33737"/>
        <dbReference type="ChEBI" id="CHEBI:33738"/>
        <dbReference type="ChEBI" id="CHEBI:57844"/>
        <dbReference type="ChEBI" id="CHEBI:59789"/>
        <dbReference type="ChEBI" id="CHEBI:78809"/>
        <dbReference type="ChEBI" id="CHEBI:83100"/>
        <dbReference type="EC" id="2.8.1.8"/>
    </reaction>
</comment>
<comment type="cofactor">
    <cofactor evidence="1">
        <name>[4Fe-4S] cluster</name>
        <dbReference type="ChEBI" id="CHEBI:49883"/>
    </cofactor>
    <text evidence="1">Binds 2 [4Fe-4S] clusters per subunit. One cluster is coordinated with 3 cysteines and an exchangeable S-adenosyl-L-methionine.</text>
</comment>
<comment type="pathway">
    <text evidence="1">Protein modification; protein lipoylation via endogenous pathway; protein N(6)-(lipoyl)lysine from octanoyl-[acyl-carrier-protein]: step 2/2.</text>
</comment>
<comment type="subcellular location">
    <subcellularLocation>
        <location evidence="1">Cytoplasm</location>
    </subcellularLocation>
</comment>
<comment type="similarity">
    <text evidence="1">Belongs to the radical SAM superfamily. Lipoyl synthase family.</text>
</comment>